<name>MINE_SHESA</name>
<accession>A0KXU4</accession>
<evidence type="ECO:0000255" key="1">
    <source>
        <dbReference type="HAMAP-Rule" id="MF_00262"/>
    </source>
</evidence>
<feature type="chain" id="PRO_0000298185" description="Cell division topological specificity factor">
    <location>
        <begin position="1"/>
        <end position="85"/>
    </location>
</feature>
<proteinExistence type="inferred from homology"/>
<sequence>MSLLDYFKSKKKPSTAVMAKERLQIIVAHQRGQRDTPDYFPQMKQEIIAVIRKYVHISDDQVSVQLDQNDDNLSVLELNVTLPDR</sequence>
<keyword id="KW-0131">Cell cycle</keyword>
<keyword id="KW-0132">Cell division</keyword>
<protein>
    <recommendedName>
        <fullName evidence="1">Cell division topological specificity factor</fullName>
    </recommendedName>
</protein>
<dbReference type="EMBL" id="CP000469">
    <property type="protein sequence ID" value="ABK48613.1"/>
    <property type="molecule type" value="Genomic_DNA"/>
</dbReference>
<dbReference type="RefSeq" id="WP_011622938.1">
    <property type="nucleotide sequence ID" value="NC_008577.1"/>
</dbReference>
<dbReference type="SMR" id="A0KXU4"/>
<dbReference type="STRING" id="94122.Shewana3_2384"/>
<dbReference type="GeneID" id="94728263"/>
<dbReference type="KEGG" id="shn:Shewana3_2384"/>
<dbReference type="eggNOG" id="COG0851">
    <property type="taxonomic scope" value="Bacteria"/>
</dbReference>
<dbReference type="HOGENOM" id="CLU_137929_2_2_6"/>
<dbReference type="OrthoDB" id="9802655at2"/>
<dbReference type="Proteomes" id="UP000002589">
    <property type="component" value="Chromosome"/>
</dbReference>
<dbReference type="GO" id="GO:0051301">
    <property type="term" value="P:cell division"/>
    <property type="evidence" value="ECO:0007669"/>
    <property type="project" value="UniProtKB-KW"/>
</dbReference>
<dbReference type="GO" id="GO:0032955">
    <property type="term" value="P:regulation of division septum assembly"/>
    <property type="evidence" value="ECO:0007669"/>
    <property type="project" value="InterPro"/>
</dbReference>
<dbReference type="FunFam" id="3.30.1070.10:FF:000001">
    <property type="entry name" value="Cell division topological specificity factor"/>
    <property type="match status" value="1"/>
</dbReference>
<dbReference type="Gene3D" id="3.30.1070.10">
    <property type="entry name" value="Cell division topological specificity factor MinE"/>
    <property type="match status" value="1"/>
</dbReference>
<dbReference type="HAMAP" id="MF_00262">
    <property type="entry name" value="MinE"/>
    <property type="match status" value="1"/>
</dbReference>
<dbReference type="InterPro" id="IPR005527">
    <property type="entry name" value="MinE"/>
</dbReference>
<dbReference type="InterPro" id="IPR036707">
    <property type="entry name" value="MinE_sf"/>
</dbReference>
<dbReference type="NCBIfam" id="TIGR01215">
    <property type="entry name" value="minE"/>
    <property type="match status" value="1"/>
</dbReference>
<dbReference type="NCBIfam" id="NF001422">
    <property type="entry name" value="PRK00296.1"/>
    <property type="match status" value="1"/>
</dbReference>
<dbReference type="Pfam" id="PF03776">
    <property type="entry name" value="MinE"/>
    <property type="match status" value="1"/>
</dbReference>
<dbReference type="SUPFAM" id="SSF55229">
    <property type="entry name" value="Cell division protein MinE topological specificity domain"/>
    <property type="match status" value="1"/>
</dbReference>
<organism>
    <name type="scientific">Shewanella sp. (strain ANA-3)</name>
    <dbReference type="NCBI Taxonomy" id="94122"/>
    <lineage>
        <taxon>Bacteria</taxon>
        <taxon>Pseudomonadati</taxon>
        <taxon>Pseudomonadota</taxon>
        <taxon>Gammaproteobacteria</taxon>
        <taxon>Alteromonadales</taxon>
        <taxon>Shewanellaceae</taxon>
        <taxon>Shewanella</taxon>
    </lineage>
</organism>
<gene>
    <name evidence="1" type="primary">minE</name>
    <name type="ordered locus">Shewana3_2384</name>
</gene>
<reference key="1">
    <citation type="submission" date="2006-09" db="EMBL/GenBank/DDBJ databases">
        <title>Complete sequence of chromosome 1 of Shewanella sp. ANA-3.</title>
        <authorList>
            <person name="Copeland A."/>
            <person name="Lucas S."/>
            <person name="Lapidus A."/>
            <person name="Barry K."/>
            <person name="Detter J.C."/>
            <person name="Glavina del Rio T."/>
            <person name="Hammon N."/>
            <person name="Israni S."/>
            <person name="Dalin E."/>
            <person name="Tice H."/>
            <person name="Pitluck S."/>
            <person name="Chertkov O."/>
            <person name="Brettin T."/>
            <person name="Bruce D."/>
            <person name="Han C."/>
            <person name="Tapia R."/>
            <person name="Gilna P."/>
            <person name="Schmutz J."/>
            <person name="Larimer F."/>
            <person name="Land M."/>
            <person name="Hauser L."/>
            <person name="Kyrpides N."/>
            <person name="Kim E."/>
            <person name="Newman D."/>
            <person name="Salticov C."/>
            <person name="Konstantinidis K."/>
            <person name="Klappenback J."/>
            <person name="Tiedje J."/>
            <person name="Richardson P."/>
        </authorList>
    </citation>
    <scope>NUCLEOTIDE SEQUENCE [LARGE SCALE GENOMIC DNA]</scope>
    <source>
        <strain>ANA-3</strain>
    </source>
</reference>
<comment type="function">
    <text evidence="1">Prevents the cell division inhibition by proteins MinC and MinD at internal division sites while permitting inhibition at polar sites. This ensures cell division at the proper site by restricting the formation of a division septum at the midpoint of the long axis of the cell.</text>
</comment>
<comment type="similarity">
    <text evidence="1">Belongs to the MinE family.</text>
</comment>